<feature type="chain" id="PRO_1000164577" description="Orotidine 5'-phosphate decarboxylase">
    <location>
        <begin position="1"/>
        <end position="236"/>
    </location>
</feature>
<feature type="active site" description="Proton donor" evidence="1">
    <location>
        <position position="67"/>
    </location>
</feature>
<feature type="binding site" evidence="1">
    <location>
        <position position="16"/>
    </location>
    <ligand>
        <name>substrate</name>
    </ligand>
</feature>
<feature type="binding site" evidence="1">
    <location>
        <position position="38"/>
    </location>
    <ligand>
        <name>substrate</name>
    </ligand>
</feature>
<feature type="binding site" evidence="1">
    <location>
        <begin position="65"/>
        <end position="74"/>
    </location>
    <ligand>
        <name>substrate</name>
    </ligand>
</feature>
<feature type="binding site" evidence="1">
    <location>
        <position position="123"/>
    </location>
    <ligand>
        <name>substrate</name>
    </ligand>
</feature>
<feature type="binding site" evidence="1">
    <location>
        <position position="184"/>
    </location>
    <ligand>
        <name>substrate</name>
    </ligand>
</feature>
<feature type="binding site" evidence="1">
    <location>
        <position position="193"/>
    </location>
    <ligand>
        <name>substrate</name>
    </ligand>
</feature>
<feature type="binding site" evidence="1">
    <location>
        <position position="213"/>
    </location>
    <ligand>
        <name>substrate</name>
    </ligand>
</feature>
<feature type="binding site" evidence="1">
    <location>
        <position position="214"/>
    </location>
    <ligand>
        <name>substrate</name>
    </ligand>
</feature>
<proteinExistence type="inferred from homology"/>
<accession>B8IFW8</accession>
<comment type="function">
    <text evidence="1">Catalyzes the decarboxylation of orotidine 5'-monophosphate (OMP) to uridine 5'-monophosphate (UMP).</text>
</comment>
<comment type="catalytic activity">
    <reaction evidence="1">
        <text>orotidine 5'-phosphate + H(+) = UMP + CO2</text>
        <dbReference type="Rhea" id="RHEA:11596"/>
        <dbReference type="ChEBI" id="CHEBI:15378"/>
        <dbReference type="ChEBI" id="CHEBI:16526"/>
        <dbReference type="ChEBI" id="CHEBI:57538"/>
        <dbReference type="ChEBI" id="CHEBI:57865"/>
        <dbReference type="EC" id="4.1.1.23"/>
    </reaction>
</comment>
<comment type="pathway">
    <text evidence="1">Pyrimidine metabolism; UMP biosynthesis via de novo pathway; UMP from orotate: step 2/2.</text>
</comment>
<comment type="subunit">
    <text evidence="1">Homodimer.</text>
</comment>
<comment type="similarity">
    <text evidence="1">Belongs to the OMP decarboxylase family. Type 1 subfamily.</text>
</comment>
<evidence type="ECO:0000255" key="1">
    <source>
        <dbReference type="HAMAP-Rule" id="MF_01200"/>
    </source>
</evidence>
<sequence length="236" mass="24561">MPDTPSPRDRLIVALDMATTDEAERLIDRLGDAASFYKIGYRLGYAGGLALAERLVKGGAKVFLDLKLHDIGNTVEEGVQSLARLGAHLLTVHAYPQTMRAAVRGRDSVPGSALRLLAVTVLTSYDDADAREAGYALSVSELVAIRALAAREIGIDGIVCAATEAAQVREIVGPDGLIVTPGIRPAGSDTGDQKRVVTPAAAIRAGVDYIVVGRPITAAADPRAVAQSIVAEIAAA</sequence>
<name>PYRF_METNO</name>
<reference key="1">
    <citation type="submission" date="2009-01" db="EMBL/GenBank/DDBJ databases">
        <title>Complete sequence of chromosome of Methylobacterium nodulans ORS 2060.</title>
        <authorList>
            <consortium name="US DOE Joint Genome Institute"/>
            <person name="Lucas S."/>
            <person name="Copeland A."/>
            <person name="Lapidus A."/>
            <person name="Glavina del Rio T."/>
            <person name="Dalin E."/>
            <person name="Tice H."/>
            <person name="Bruce D."/>
            <person name="Goodwin L."/>
            <person name="Pitluck S."/>
            <person name="Sims D."/>
            <person name="Brettin T."/>
            <person name="Detter J.C."/>
            <person name="Han C."/>
            <person name="Larimer F."/>
            <person name="Land M."/>
            <person name="Hauser L."/>
            <person name="Kyrpides N."/>
            <person name="Ivanova N."/>
            <person name="Marx C.J."/>
            <person name="Richardson P."/>
        </authorList>
    </citation>
    <scope>NUCLEOTIDE SEQUENCE [LARGE SCALE GENOMIC DNA]</scope>
    <source>
        <strain>LMG 21967 / CNCM I-2342 / ORS 2060</strain>
    </source>
</reference>
<keyword id="KW-0210">Decarboxylase</keyword>
<keyword id="KW-0456">Lyase</keyword>
<keyword id="KW-0665">Pyrimidine biosynthesis</keyword>
<keyword id="KW-1185">Reference proteome</keyword>
<protein>
    <recommendedName>
        <fullName evidence="1">Orotidine 5'-phosphate decarboxylase</fullName>
        <ecNumber evidence="1">4.1.1.23</ecNumber>
    </recommendedName>
    <alternativeName>
        <fullName evidence="1">OMP decarboxylase</fullName>
        <shortName evidence="1">OMPDCase</shortName>
        <shortName evidence="1">OMPdecase</shortName>
    </alternativeName>
</protein>
<organism>
    <name type="scientific">Methylobacterium nodulans (strain LMG 21967 / CNCM I-2342 / ORS 2060)</name>
    <dbReference type="NCBI Taxonomy" id="460265"/>
    <lineage>
        <taxon>Bacteria</taxon>
        <taxon>Pseudomonadati</taxon>
        <taxon>Pseudomonadota</taxon>
        <taxon>Alphaproteobacteria</taxon>
        <taxon>Hyphomicrobiales</taxon>
        <taxon>Methylobacteriaceae</taxon>
        <taxon>Methylobacterium</taxon>
    </lineage>
</organism>
<gene>
    <name evidence="1" type="primary">pyrF</name>
    <name type="ordered locus">Mnod_4816</name>
</gene>
<dbReference type="EC" id="4.1.1.23" evidence="1"/>
<dbReference type="EMBL" id="CP001349">
    <property type="protein sequence ID" value="ACL59678.1"/>
    <property type="molecule type" value="Genomic_DNA"/>
</dbReference>
<dbReference type="RefSeq" id="WP_015931308.1">
    <property type="nucleotide sequence ID" value="NC_011894.1"/>
</dbReference>
<dbReference type="SMR" id="B8IFW8"/>
<dbReference type="STRING" id="460265.Mnod_4816"/>
<dbReference type="KEGG" id="mno:Mnod_4816"/>
<dbReference type="eggNOG" id="COG0284">
    <property type="taxonomic scope" value="Bacteria"/>
</dbReference>
<dbReference type="HOGENOM" id="CLU_067069_1_0_5"/>
<dbReference type="OrthoDB" id="9806203at2"/>
<dbReference type="UniPathway" id="UPA00070">
    <property type="reaction ID" value="UER00120"/>
</dbReference>
<dbReference type="Proteomes" id="UP000008207">
    <property type="component" value="Chromosome"/>
</dbReference>
<dbReference type="GO" id="GO:0005829">
    <property type="term" value="C:cytosol"/>
    <property type="evidence" value="ECO:0007669"/>
    <property type="project" value="TreeGrafter"/>
</dbReference>
<dbReference type="GO" id="GO:0004590">
    <property type="term" value="F:orotidine-5'-phosphate decarboxylase activity"/>
    <property type="evidence" value="ECO:0007669"/>
    <property type="project" value="UniProtKB-UniRule"/>
</dbReference>
<dbReference type="GO" id="GO:0006207">
    <property type="term" value="P:'de novo' pyrimidine nucleobase biosynthetic process"/>
    <property type="evidence" value="ECO:0007669"/>
    <property type="project" value="InterPro"/>
</dbReference>
<dbReference type="GO" id="GO:0044205">
    <property type="term" value="P:'de novo' UMP biosynthetic process"/>
    <property type="evidence" value="ECO:0007669"/>
    <property type="project" value="UniProtKB-UniRule"/>
</dbReference>
<dbReference type="CDD" id="cd04725">
    <property type="entry name" value="OMP_decarboxylase_like"/>
    <property type="match status" value="1"/>
</dbReference>
<dbReference type="Gene3D" id="3.20.20.70">
    <property type="entry name" value="Aldolase class I"/>
    <property type="match status" value="1"/>
</dbReference>
<dbReference type="HAMAP" id="MF_01200_B">
    <property type="entry name" value="OMPdecase_type1_B"/>
    <property type="match status" value="1"/>
</dbReference>
<dbReference type="InterPro" id="IPR013785">
    <property type="entry name" value="Aldolase_TIM"/>
</dbReference>
<dbReference type="InterPro" id="IPR014732">
    <property type="entry name" value="OMPdecase"/>
</dbReference>
<dbReference type="InterPro" id="IPR018089">
    <property type="entry name" value="OMPdecase_AS"/>
</dbReference>
<dbReference type="InterPro" id="IPR047596">
    <property type="entry name" value="OMPdecase_bac"/>
</dbReference>
<dbReference type="InterPro" id="IPR001754">
    <property type="entry name" value="OMPdeCOase_dom"/>
</dbReference>
<dbReference type="InterPro" id="IPR011060">
    <property type="entry name" value="RibuloseP-bd_barrel"/>
</dbReference>
<dbReference type="NCBIfam" id="NF001273">
    <property type="entry name" value="PRK00230.1"/>
    <property type="match status" value="1"/>
</dbReference>
<dbReference type="NCBIfam" id="TIGR01740">
    <property type="entry name" value="pyrF"/>
    <property type="match status" value="1"/>
</dbReference>
<dbReference type="PANTHER" id="PTHR32119">
    <property type="entry name" value="OROTIDINE 5'-PHOSPHATE DECARBOXYLASE"/>
    <property type="match status" value="1"/>
</dbReference>
<dbReference type="PANTHER" id="PTHR32119:SF2">
    <property type="entry name" value="OROTIDINE 5'-PHOSPHATE DECARBOXYLASE"/>
    <property type="match status" value="1"/>
</dbReference>
<dbReference type="Pfam" id="PF00215">
    <property type="entry name" value="OMPdecase"/>
    <property type="match status" value="1"/>
</dbReference>
<dbReference type="SMART" id="SM00934">
    <property type="entry name" value="OMPdecase"/>
    <property type="match status" value="1"/>
</dbReference>
<dbReference type="SUPFAM" id="SSF51366">
    <property type="entry name" value="Ribulose-phoshate binding barrel"/>
    <property type="match status" value="1"/>
</dbReference>
<dbReference type="PROSITE" id="PS00156">
    <property type="entry name" value="OMPDECASE"/>
    <property type="match status" value="1"/>
</dbReference>